<evidence type="ECO:0000250" key="1"/>
<evidence type="ECO:0000250" key="2">
    <source>
        <dbReference type="UniProtKB" id="P04853"/>
    </source>
</evidence>
<evidence type="ECO:0000250" key="3">
    <source>
        <dbReference type="UniProtKB" id="Q91UL0"/>
    </source>
</evidence>
<evidence type="ECO:0000250" key="4">
    <source>
        <dbReference type="UniProtKB" id="Q9WAF5"/>
    </source>
</evidence>
<evidence type="ECO:0000255" key="5"/>
<evidence type="ECO:0000305" key="6"/>
<gene>
    <name type="primary">HN</name>
</gene>
<sequence>MEYWKHTNHGKDACNELGTSMATHGNKITNKITYILWTIILVLLSIIFIIVLINSIKSEKAHESLLQDVNNEFMEVTEKIQMASDNINDLIQSGVNTRLLTIQSHVQNYIPISLTQQMSDLRKFISEITIRNDNQEVPPQRITHDVGIKPLNPDDFWRCTSGLPSLMKTPKIRLMPGPGLLAMPTTVDGCVRTPSLVINDLIYAYTSNLITRGCQDIGKSYQVLQIGIITVNSDLVPDLNPRISHTFNINDNRKSCSLALLNTDVYQLCSTPKVDERSDYASSGIEDIVLDIVNHDGSISTTRFKNNNISFDQPYAALYPSVGPGIYYKGKIIFLGYGGLEHPINENAICNTTGCPGKTQRDCNQASHSPWFSDRRMVNSIIVVDKGLNSIPKLKVWTISMRQNYWGSEGRLLLLGNKIYIYTRSTSWHSKLQLGIIDITDYSDIRIKWTWHNVLSRPGNNECPWGHSCPDGCITGVYTDAYPLNPTGSIVSSVILDSQKTRVNPVITYSTATERVNELAIRNKTLSAGYTTTSCITHYNKGYCFHIVEINHKSLDTFQPMLFKTEIPKSCS</sequence>
<dbReference type="EC" id="3.2.1.18" evidence="4"/>
<dbReference type="EMBL" id="M18760">
    <property type="protein sequence ID" value="AAA46847.1"/>
    <property type="molecule type" value="Genomic_RNA"/>
</dbReference>
<dbReference type="PIR" id="B29970">
    <property type="entry name" value="HNNZ74"/>
</dbReference>
<dbReference type="SMR" id="P12561"/>
<dbReference type="CAZy" id="GH83">
    <property type="family name" value="Glycoside Hydrolase Family 83"/>
</dbReference>
<dbReference type="GlyCosmos" id="P12561">
    <property type="glycosylation" value="3 sites, No reported glycans"/>
</dbReference>
<dbReference type="GO" id="GO:0020002">
    <property type="term" value="C:host cell plasma membrane"/>
    <property type="evidence" value="ECO:0007669"/>
    <property type="project" value="UniProtKB-SubCell"/>
</dbReference>
<dbReference type="GO" id="GO:0016020">
    <property type="term" value="C:membrane"/>
    <property type="evidence" value="ECO:0007669"/>
    <property type="project" value="UniProtKB-KW"/>
</dbReference>
<dbReference type="GO" id="GO:0019031">
    <property type="term" value="C:viral envelope"/>
    <property type="evidence" value="ECO:0007669"/>
    <property type="project" value="UniProtKB-KW"/>
</dbReference>
<dbReference type="GO" id="GO:0055036">
    <property type="term" value="C:virion membrane"/>
    <property type="evidence" value="ECO:0007669"/>
    <property type="project" value="UniProtKB-SubCell"/>
</dbReference>
<dbReference type="GO" id="GO:0004308">
    <property type="term" value="F:exo-alpha-sialidase activity"/>
    <property type="evidence" value="ECO:0007669"/>
    <property type="project" value="UniProtKB-EC"/>
</dbReference>
<dbReference type="GO" id="GO:0046789">
    <property type="term" value="F:host cell surface receptor binding"/>
    <property type="evidence" value="ECO:0007669"/>
    <property type="project" value="InterPro"/>
</dbReference>
<dbReference type="GO" id="GO:0046718">
    <property type="term" value="P:symbiont entry into host cell"/>
    <property type="evidence" value="ECO:0007669"/>
    <property type="project" value="UniProtKB-KW"/>
</dbReference>
<dbReference type="GO" id="GO:0019062">
    <property type="term" value="P:virion attachment to host cell"/>
    <property type="evidence" value="ECO:0007669"/>
    <property type="project" value="UniProtKB-KW"/>
</dbReference>
<dbReference type="CDD" id="cd15469">
    <property type="entry name" value="HN"/>
    <property type="match status" value="1"/>
</dbReference>
<dbReference type="Gene3D" id="2.120.10.10">
    <property type="match status" value="1"/>
</dbReference>
<dbReference type="InterPro" id="IPR016285">
    <property type="entry name" value="Hemagglutn-neuramid"/>
</dbReference>
<dbReference type="InterPro" id="IPR000665">
    <property type="entry name" value="Hemagglutn/HN"/>
</dbReference>
<dbReference type="InterPro" id="IPR036278">
    <property type="entry name" value="Sialidase_sf"/>
</dbReference>
<dbReference type="Pfam" id="PF00423">
    <property type="entry name" value="HN"/>
    <property type="match status" value="1"/>
</dbReference>
<dbReference type="PIRSF" id="PIRSF001072">
    <property type="entry name" value="Hemagglut-neuramid_paramyxoV"/>
    <property type="match status" value="1"/>
</dbReference>
<dbReference type="SUPFAM" id="SSF50939">
    <property type="entry name" value="Sialidases"/>
    <property type="match status" value="1"/>
</dbReference>
<comment type="function">
    <text evidence="1">Attaches the virus to sialic acid-containing cell receptors and thereby initiating infection. Binding of HN protein to the receptor induces a conformational change that allows the F protein to trigger virion/cell membranes fusion (By similarity).</text>
</comment>
<comment type="function">
    <text evidence="1">Neuraminidase activity ensures the efficient spread of the virus by dissociating the mature virions from the neuraminic acid containing glycoproteins.</text>
</comment>
<comment type="catalytic activity">
    <reaction evidence="4">
        <text>Hydrolysis of alpha-(2-&gt;3)-, alpha-(2-&gt;6)-, alpha-(2-&gt;8)- glycosidic linkages of terminal sialic acid residues in oligosaccharides, glycoproteins, glycolipids, colominic acid and synthetic substrates.</text>
        <dbReference type="EC" id="3.2.1.18"/>
    </reaction>
</comment>
<comment type="subunit">
    <text evidence="2 4">Homotetramer; composed of disulfide-linked homodimers (By similarity). Interacts with F protein trimer (By similarity).</text>
</comment>
<comment type="subcellular location">
    <subcellularLocation>
        <location evidence="6">Virion membrane</location>
        <topology evidence="6">Single-pass type II membrane protein</topology>
    </subcellularLocation>
    <subcellularLocation>
        <location evidence="6">Host cell membrane</location>
        <topology evidence="6">Single-pass type II membrane protein</topology>
    </subcellularLocation>
</comment>
<comment type="domain">
    <text evidence="4">The C-terminus (head domain) is involved in binding the cellular receptor.</text>
</comment>
<comment type="similarity">
    <text evidence="6">Belongs to the paramyxoviruses hemagglutinin-neuraminidase family.</text>
</comment>
<keyword id="KW-1015">Disulfide bond</keyword>
<keyword id="KW-0325">Glycoprotein</keyword>
<keyword id="KW-0348">Hemagglutinin</keyword>
<keyword id="KW-1032">Host cell membrane</keyword>
<keyword id="KW-1043">Host membrane</keyword>
<keyword id="KW-0945">Host-virus interaction</keyword>
<keyword id="KW-0378">Hydrolase</keyword>
<keyword id="KW-0472">Membrane</keyword>
<keyword id="KW-0735">Signal-anchor</keyword>
<keyword id="KW-0812">Transmembrane</keyword>
<keyword id="KW-1133">Transmembrane helix</keyword>
<keyword id="KW-1161">Viral attachment to host cell</keyword>
<keyword id="KW-0261">Viral envelope protein</keyword>
<keyword id="KW-0946">Virion</keyword>
<keyword id="KW-1160">Virus entry into host cell</keyword>
<name>HN_PI3HA</name>
<reference key="1">
    <citation type="journal article" date="1988" name="Virology">
        <title>Nucleotide and deduced amino acid sequence of hemagglutinin-neuraminidase genes of human type 3 parainfluenza viruses isolated from 1957 to 1983.</title>
        <authorList>
            <person name="van Wyke Coelingh K.L."/>
            <person name="Winter C.C."/>
            <person name="Murphy B.R."/>
        </authorList>
    </citation>
    <scope>NUCLEOTIDE SEQUENCE [GENOMIC RNA]</scope>
</reference>
<organismHost>
    <name type="scientific">Homo sapiens</name>
    <name type="common">Human</name>
    <dbReference type="NCBI Taxonomy" id="9606"/>
</organismHost>
<protein>
    <recommendedName>
        <fullName>Hemagglutinin-neuraminidase</fullName>
        <ecNumber evidence="4">3.2.1.18</ecNumber>
    </recommendedName>
</protein>
<accession>P12561</accession>
<feature type="chain" id="PRO_0000142626" description="Hemagglutinin-neuraminidase">
    <location>
        <begin position="1"/>
        <end position="572"/>
    </location>
</feature>
<feature type="topological domain" description="Intravirion" evidence="5">
    <location>
        <begin position="1"/>
        <end position="31"/>
    </location>
</feature>
<feature type="transmembrane region" description="Helical" evidence="5">
    <location>
        <begin position="32"/>
        <end position="52"/>
    </location>
</feature>
<feature type="topological domain" description="Virion surface" evidence="5">
    <location>
        <begin position="53"/>
        <end position="572"/>
    </location>
</feature>
<feature type="region of interest" description="Involved in neuraminidase activity" evidence="3">
    <location>
        <begin position="252"/>
        <end position="257"/>
    </location>
</feature>
<feature type="glycosylation site" description="N-linked (GlcNAc...) asparagine; by host" evidence="5">
    <location>
        <position position="308"/>
    </location>
</feature>
<feature type="glycosylation site" description="N-linked (GlcNAc...) asparagine; by host" evidence="5">
    <location>
        <position position="351"/>
    </location>
</feature>
<feature type="glycosylation site" description="N-linked (GlcNAc...) asparagine; by host" evidence="5">
    <location>
        <position position="523"/>
    </location>
</feature>
<feature type="disulfide bond" evidence="4">
    <location>
        <begin position="190"/>
        <end position="214"/>
    </location>
</feature>
<feature type="disulfide bond" evidence="4">
    <location>
        <begin position="256"/>
        <end position="269"/>
    </location>
</feature>
<feature type="disulfide bond" evidence="4">
    <location>
        <begin position="355"/>
        <end position="469"/>
    </location>
</feature>
<feature type="disulfide bond" evidence="4">
    <location>
        <begin position="463"/>
        <end position="473"/>
    </location>
</feature>
<feature type="disulfide bond" evidence="4">
    <location>
        <begin position="535"/>
        <end position="544"/>
    </location>
</feature>
<proteinExistence type="inferred from homology"/>
<organism>
    <name type="scientific">Human parainfluenza 3 virus (strain Aus/124854/74)</name>
    <name type="common">HPIV-3</name>
    <dbReference type="NCBI Taxonomy" id="11218"/>
    <lineage>
        <taxon>Viruses</taxon>
        <taxon>Riboviria</taxon>
        <taxon>Orthornavirae</taxon>
        <taxon>Negarnaviricota</taxon>
        <taxon>Haploviricotina</taxon>
        <taxon>Monjiviricetes</taxon>
        <taxon>Mononegavirales</taxon>
        <taxon>Paramyxoviridae</taxon>
        <taxon>Feraresvirinae</taxon>
        <taxon>Respirovirus</taxon>
        <taxon>Respirovirus pneumoniae</taxon>
    </lineage>
</organism>